<sequence>MSARGPAIGIDLGTTYSCVGVFQHGKVEIIANDQGNRTTPSYVAFTDTERLIGDAAKNQVAMNPTNTIFDAKRLIGRKFEDATVQSDMKHWPFRVVSEGGKPKVQVEYKGETKTFFPEEISSMVLTKMKEIAEAYLGGKVHSAVITVPAYFNDSQRQATKDAGTITGLNVLRIINEPTAAAIAYGLDKKGCAGGEKNVLIFDLGGGTFDVSILTIEDGIFEVKSTAGDTHLGGEDFDNRMVSHLAEEFKRKHKKDIGPNKRAVRRLRTACERAKRTLSSSTQASIEIDSLYEGVDFYTSITRARFEELNADLFRGTLEPVEKALRDAKLDKGQIQEIVLVGGSTRIPKIQKLLQDFFNGKELNKSINPDEAVAYGAAVQAAILIGDKSENVQDLLLLDVTPLSLGIETAGGVMTPLIKRNTTIPTKQTQTFTTYSDNQSSVLVQVYEGERAMTKDNNLLGKFDLTGIPPAPRGVPQIEVTFDIDANGILNVTAADKSTGKENKITITNDKGRLSKDDIDRMVQEAERYKSEDEANRDRVAAKNALESYTYNIKQTVEDEKLRGKISEQDKNKILDKCQEVINWLDRNQMAEKDEYEHKQKELERVCNPIISKLYQGGPGGGSGGGGSGASGGPTIEEVD</sequence>
<evidence type="ECO:0000250" key="1">
    <source>
        <dbReference type="UniProtKB" id="P11142"/>
    </source>
</evidence>
<evidence type="ECO:0000250" key="2">
    <source>
        <dbReference type="UniProtKB" id="P14659"/>
    </source>
</evidence>
<evidence type="ECO:0000250" key="3">
    <source>
        <dbReference type="UniProtKB" id="P17156"/>
    </source>
</evidence>
<evidence type="ECO:0000256" key="4">
    <source>
        <dbReference type="SAM" id="MobiDB-lite"/>
    </source>
</evidence>
<evidence type="ECO:0000269" key="5">
    <source>
    </source>
</evidence>
<evidence type="ECO:0000269" key="6">
    <source>
    </source>
</evidence>
<evidence type="ECO:0000269" key="7">
    <source ref="4"/>
</evidence>
<evidence type="ECO:0000303" key="8">
    <source>
    </source>
</evidence>
<evidence type="ECO:0000305" key="9"/>
<evidence type="ECO:0000305" key="10">
    <source>
    </source>
</evidence>
<evidence type="ECO:0007829" key="11">
    <source>
        <dbReference type="PDB" id="3I33"/>
    </source>
</evidence>
<evidence type="ECO:0007829" key="12">
    <source>
        <dbReference type="PDB" id="4FSV"/>
    </source>
</evidence>
<organism>
    <name type="scientific">Homo sapiens</name>
    <name type="common">Human</name>
    <dbReference type="NCBI Taxonomy" id="9606"/>
    <lineage>
        <taxon>Eukaryota</taxon>
        <taxon>Metazoa</taxon>
        <taxon>Chordata</taxon>
        <taxon>Craniata</taxon>
        <taxon>Vertebrata</taxon>
        <taxon>Euteleostomi</taxon>
        <taxon>Mammalia</taxon>
        <taxon>Eutheria</taxon>
        <taxon>Euarchontoglires</taxon>
        <taxon>Primates</taxon>
        <taxon>Haplorrhini</taxon>
        <taxon>Catarrhini</taxon>
        <taxon>Hominidae</taxon>
        <taxon>Homo</taxon>
    </lineage>
</organism>
<proteinExistence type="evidence at protein level"/>
<keyword id="KW-0002">3D-structure</keyword>
<keyword id="KW-0067">ATP-binding</keyword>
<keyword id="KW-0143">Chaperone</keyword>
<keyword id="KW-0963">Cytoplasm</keyword>
<keyword id="KW-0206">Cytoskeleton</keyword>
<keyword id="KW-0221">Differentiation</keyword>
<keyword id="KW-0488">Methylation</keyword>
<keyword id="KW-0547">Nucleotide-binding</keyword>
<keyword id="KW-0597">Phosphoprotein</keyword>
<keyword id="KW-1267">Proteomics identification</keyword>
<keyword id="KW-1185">Reference proteome</keyword>
<keyword id="KW-0744">Spermatogenesis</keyword>
<keyword id="KW-0346">Stress response</keyword>
<accession>P54652</accession>
<accession>Q15508</accession>
<accession>Q53XM3</accession>
<accession>Q9UE78</accession>
<dbReference type="EMBL" id="L26336">
    <property type="protein sequence ID" value="AAA52698.1"/>
    <property type="molecule type" value="Genomic_DNA"/>
</dbReference>
<dbReference type="EMBL" id="U56725">
    <property type="protein sequence ID" value="AAD11466.1"/>
    <property type="molecule type" value="mRNA"/>
</dbReference>
<dbReference type="EMBL" id="BT009815">
    <property type="protein sequence ID" value="AAP88817.1"/>
    <property type="molecule type" value="mRNA"/>
</dbReference>
<dbReference type="EMBL" id="DQ489378">
    <property type="protein sequence ID" value="ABE96830.1"/>
    <property type="molecule type" value="Genomic_DNA"/>
</dbReference>
<dbReference type="EMBL" id="BC001752">
    <property type="protein sequence ID" value="AAH01752.1"/>
    <property type="molecule type" value="mRNA"/>
</dbReference>
<dbReference type="EMBL" id="BC036107">
    <property type="protein sequence ID" value="AAH36107.1"/>
    <property type="molecule type" value="mRNA"/>
</dbReference>
<dbReference type="EMBL" id="AH006615">
    <property type="protein sequence ID" value="AAC50076.1"/>
    <property type="molecule type" value="Genomic_DNA"/>
</dbReference>
<dbReference type="CCDS" id="CCDS9766.1"/>
<dbReference type="PIR" id="A55719">
    <property type="entry name" value="A55719"/>
</dbReference>
<dbReference type="PIR" id="I37564">
    <property type="entry name" value="I37564"/>
</dbReference>
<dbReference type="RefSeq" id="NP_001374860.1">
    <property type="nucleotide sequence ID" value="NM_001387931.1"/>
</dbReference>
<dbReference type="RefSeq" id="NP_068814.2">
    <property type="nucleotide sequence ID" value="NM_021979.3"/>
</dbReference>
<dbReference type="PDB" id="3I33">
    <property type="method" value="X-ray"/>
    <property type="resolution" value="1.30 A"/>
    <property type="chains" value="A=6-386"/>
</dbReference>
<dbReference type="PDB" id="4FSV">
    <property type="method" value="X-ray"/>
    <property type="resolution" value="1.80 A"/>
    <property type="chains" value="A=2-387"/>
</dbReference>
<dbReference type="PDB" id="5FPD">
    <property type="method" value="X-ray"/>
    <property type="resolution" value="1.97 A"/>
    <property type="chains" value="A/B=4-386"/>
</dbReference>
<dbReference type="PDB" id="5FPE">
    <property type="method" value="X-ray"/>
    <property type="resolution" value="1.96 A"/>
    <property type="chains" value="A/B=4-386"/>
</dbReference>
<dbReference type="PDB" id="5FPM">
    <property type="method" value="X-ray"/>
    <property type="resolution" value="1.96 A"/>
    <property type="chains" value="A/B=4-386"/>
</dbReference>
<dbReference type="PDB" id="5FPN">
    <property type="method" value="X-ray"/>
    <property type="resolution" value="1.96 A"/>
    <property type="chains" value="A/B=4-639"/>
</dbReference>
<dbReference type="PDBsum" id="3I33"/>
<dbReference type="PDBsum" id="4FSV"/>
<dbReference type="PDBsum" id="5FPD"/>
<dbReference type="PDBsum" id="5FPE"/>
<dbReference type="PDBsum" id="5FPM"/>
<dbReference type="PDBsum" id="5FPN"/>
<dbReference type="SMR" id="P54652"/>
<dbReference type="BioGRID" id="109538">
    <property type="interactions" value="593"/>
</dbReference>
<dbReference type="CORUM" id="P54652"/>
<dbReference type="ELM" id="P54652"/>
<dbReference type="FunCoup" id="P54652">
    <property type="interactions" value="1830"/>
</dbReference>
<dbReference type="IntAct" id="P54652">
    <property type="interactions" value="351"/>
</dbReference>
<dbReference type="MINT" id="P54652"/>
<dbReference type="STRING" id="9606.ENSP00000378199"/>
<dbReference type="BindingDB" id="P54652"/>
<dbReference type="ChEMBL" id="CHEMBL2062348"/>
<dbReference type="DrugBank" id="DB04216">
    <property type="generic name" value="Quercetin"/>
</dbReference>
<dbReference type="GlyConnect" id="1303">
    <property type="glycosylation" value="1 N-Linked glycan (1 site)"/>
</dbReference>
<dbReference type="GlyGen" id="P54652">
    <property type="glycosylation" value="3 sites, 1 O-linked glycan (2 sites)"/>
</dbReference>
<dbReference type="iPTMnet" id="P54652"/>
<dbReference type="MetOSite" id="P54652"/>
<dbReference type="PhosphoSitePlus" id="P54652"/>
<dbReference type="SwissPalm" id="P54652"/>
<dbReference type="BioMuta" id="HSPA2"/>
<dbReference type="DMDM" id="1708307"/>
<dbReference type="REPRODUCTION-2DPAGE" id="IPI00007702"/>
<dbReference type="jPOST" id="P54652"/>
<dbReference type="MassIVE" id="P54652"/>
<dbReference type="PaxDb" id="9606-ENSP00000378199"/>
<dbReference type="PeptideAtlas" id="P54652"/>
<dbReference type="PRIDE" id="P54652"/>
<dbReference type="ProteomicsDB" id="56690"/>
<dbReference type="Pumba" id="P54652"/>
<dbReference type="Antibodypedia" id="6">
    <property type="antibodies" value="278 antibodies from 35 providers"/>
</dbReference>
<dbReference type="DNASU" id="3306"/>
<dbReference type="Ensembl" id="ENST00000247207.7">
    <property type="protein sequence ID" value="ENSP00000247207.6"/>
    <property type="gene ID" value="ENSG00000126803.10"/>
</dbReference>
<dbReference type="Ensembl" id="ENST00000394709.2">
    <property type="protein sequence ID" value="ENSP00000378199.1"/>
    <property type="gene ID" value="ENSG00000126803.10"/>
</dbReference>
<dbReference type="GeneID" id="3306"/>
<dbReference type="KEGG" id="hsa:3306"/>
<dbReference type="MANE-Select" id="ENST00000247207.7">
    <property type="protein sequence ID" value="ENSP00000247207.6"/>
    <property type="RefSeq nucleotide sequence ID" value="NM_021979.4"/>
    <property type="RefSeq protein sequence ID" value="NP_068814.2"/>
</dbReference>
<dbReference type="UCSC" id="uc001xhj.4">
    <property type="organism name" value="human"/>
</dbReference>
<dbReference type="AGR" id="HGNC:5235"/>
<dbReference type="CTD" id="3306"/>
<dbReference type="DisGeNET" id="3306"/>
<dbReference type="GeneCards" id="HSPA2"/>
<dbReference type="HGNC" id="HGNC:5235">
    <property type="gene designation" value="HSPA2"/>
</dbReference>
<dbReference type="HPA" id="ENSG00000126803">
    <property type="expression patterns" value="Tissue enhanced (brain, skeletal muscle)"/>
</dbReference>
<dbReference type="MIM" id="140560">
    <property type="type" value="gene"/>
</dbReference>
<dbReference type="neXtProt" id="NX_P54652"/>
<dbReference type="OpenTargets" id="ENSG00000126803"/>
<dbReference type="PharmGKB" id="PA29501"/>
<dbReference type="VEuPathDB" id="HostDB:ENSG00000126803"/>
<dbReference type="eggNOG" id="KOG0101">
    <property type="taxonomic scope" value="Eukaryota"/>
</dbReference>
<dbReference type="GeneTree" id="ENSGT00940000154813"/>
<dbReference type="HOGENOM" id="CLU_005965_3_0_1"/>
<dbReference type="InParanoid" id="P54652"/>
<dbReference type="OMA" id="SYAYNIK"/>
<dbReference type="OrthoDB" id="2401965at2759"/>
<dbReference type="PAN-GO" id="P54652">
    <property type="GO annotations" value="14 GO annotations based on evolutionary models"/>
</dbReference>
<dbReference type="PhylomeDB" id="P54652"/>
<dbReference type="TreeFam" id="TF105042"/>
<dbReference type="PathwayCommons" id="P54652"/>
<dbReference type="Reactome" id="R-HSA-1221632">
    <property type="pathway name" value="Meiotic synapsis"/>
</dbReference>
<dbReference type="Reactome" id="R-HSA-3371453">
    <property type="pathway name" value="Regulation of HSF1-mediated heat shock response"/>
</dbReference>
<dbReference type="Reactome" id="R-HSA-3371497">
    <property type="pathway name" value="HSP90 chaperone cycle for steroid hormone receptors (SHR) in the presence of ligand"/>
</dbReference>
<dbReference type="Reactome" id="R-HSA-3371568">
    <property type="pathway name" value="Attenuation phase"/>
</dbReference>
<dbReference type="Reactome" id="R-HSA-9833482">
    <property type="pathway name" value="PKR-mediated signaling"/>
</dbReference>
<dbReference type="SignaLink" id="P54652"/>
<dbReference type="SIGNOR" id="P54652"/>
<dbReference type="BioGRID-ORCS" id="3306">
    <property type="hits" value="18 hits in 1158 CRISPR screens"/>
</dbReference>
<dbReference type="CD-CODE" id="232F8A39">
    <property type="entry name" value="P-body"/>
</dbReference>
<dbReference type="CD-CODE" id="8C2F96ED">
    <property type="entry name" value="Centrosome"/>
</dbReference>
<dbReference type="CD-CODE" id="91857CE7">
    <property type="entry name" value="Nucleolus"/>
</dbReference>
<dbReference type="CD-CODE" id="DEE660B4">
    <property type="entry name" value="Stress granule"/>
</dbReference>
<dbReference type="CD-CODE" id="FB4E32DD">
    <property type="entry name" value="Presynaptic clusters and postsynaptic densities"/>
</dbReference>
<dbReference type="ChiTaRS" id="HSPA2">
    <property type="organism name" value="human"/>
</dbReference>
<dbReference type="EvolutionaryTrace" id="P54652"/>
<dbReference type="GeneWiki" id="HSPA2"/>
<dbReference type="GenomeRNAi" id="3306"/>
<dbReference type="Pharos" id="P54652">
    <property type="development level" value="Tchem"/>
</dbReference>
<dbReference type="PRO" id="PR:P54652"/>
<dbReference type="Proteomes" id="UP000005640">
    <property type="component" value="Chromosome 14"/>
</dbReference>
<dbReference type="RNAct" id="P54652">
    <property type="molecule type" value="protein"/>
</dbReference>
<dbReference type="Bgee" id="ENSG00000126803">
    <property type="expression patterns" value="Expressed in inferior vagus X ganglion and 207 other cell types or tissues"/>
</dbReference>
<dbReference type="ExpressionAtlas" id="P54652">
    <property type="expression patterns" value="baseline and differential"/>
</dbReference>
<dbReference type="GO" id="GO:0072562">
    <property type="term" value="C:blood microparticle"/>
    <property type="evidence" value="ECO:0007005"/>
    <property type="project" value="UniProtKB"/>
</dbReference>
<dbReference type="GO" id="GO:0036128">
    <property type="term" value="C:CatSper complex"/>
    <property type="evidence" value="ECO:0000250"/>
    <property type="project" value="UniProtKB"/>
</dbReference>
<dbReference type="GO" id="GO:0009986">
    <property type="term" value="C:cell surface"/>
    <property type="evidence" value="ECO:0007669"/>
    <property type="project" value="Ensembl"/>
</dbReference>
<dbReference type="GO" id="GO:0005737">
    <property type="term" value="C:cytoplasm"/>
    <property type="evidence" value="ECO:0000318"/>
    <property type="project" value="GO_Central"/>
</dbReference>
<dbReference type="GO" id="GO:0005829">
    <property type="term" value="C:cytosol"/>
    <property type="evidence" value="ECO:0000314"/>
    <property type="project" value="UniProtKB"/>
</dbReference>
<dbReference type="GO" id="GO:0070062">
    <property type="term" value="C:extracellular exosome"/>
    <property type="evidence" value="ECO:0007005"/>
    <property type="project" value="UniProtKB"/>
</dbReference>
<dbReference type="GO" id="GO:0001673">
    <property type="term" value="C:male germ cell nucleus"/>
    <property type="evidence" value="ECO:0007669"/>
    <property type="project" value="Ensembl"/>
</dbReference>
<dbReference type="GO" id="GO:0072687">
    <property type="term" value="C:meiotic spindle"/>
    <property type="evidence" value="ECO:0000250"/>
    <property type="project" value="UniProtKB"/>
</dbReference>
<dbReference type="GO" id="GO:0016020">
    <property type="term" value="C:membrane"/>
    <property type="evidence" value="ECO:0007005"/>
    <property type="project" value="UniProtKB"/>
</dbReference>
<dbReference type="GO" id="GO:0005634">
    <property type="term" value="C:nucleus"/>
    <property type="evidence" value="ECO:0007005"/>
    <property type="project" value="UniProtKB"/>
</dbReference>
<dbReference type="GO" id="GO:0005886">
    <property type="term" value="C:plasma membrane"/>
    <property type="evidence" value="ECO:0000318"/>
    <property type="project" value="GO_Central"/>
</dbReference>
<dbReference type="GO" id="GO:0000795">
    <property type="term" value="C:synaptonemal complex"/>
    <property type="evidence" value="ECO:0007669"/>
    <property type="project" value="Ensembl"/>
</dbReference>
<dbReference type="GO" id="GO:0005524">
    <property type="term" value="F:ATP binding"/>
    <property type="evidence" value="ECO:0007669"/>
    <property type="project" value="UniProtKB-KW"/>
</dbReference>
<dbReference type="GO" id="GO:0016887">
    <property type="term" value="F:ATP hydrolysis activity"/>
    <property type="evidence" value="ECO:0000318"/>
    <property type="project" value="GO_Central"/>
</dbReference>
<dbReference type="GO" id="GO:0140662">
    <property type="term" value="F:ATP-dependent protein folding chaperone"/>
    <property type="evidence" value="ECO:0007669"/>
    <property type="project" value="InterPro"/>
</dbReference>
<dbReference type="GO" id="GO:0097718">
    <property type="term" value="F:disordered domain specific binding"/>
    <property type="evidence" value="ECO:0000353"/>
    <property type="project" value="CAFA"/>
</dbReference>
<dbReference type="GO" id="GO:0019899">
    <property type="term" value="F:enzyme binding"/>
    <property type="evidence" value="ECO:0000353"/>
    <property type="project" value="BHF-UCL"/>
</dbReference>
<dbReference type="GO" id="GO:0051861">
    <property type="term" value="F:glycolipid binding"/>
    <property type="evidence" value="ECO:0007669"/>
    <property type="project" value="Ensembl"/>
</dbReference>
<dbReference type="GO" id="GO:0031072">
    <property type="term" value="F:heat shock protein binding"/>
    <property type="evidence" value="ECO:0000318"/>
    <property type="project" value="GO_Central"/>
</dbReference>
<dbReference type="GO" id="GO:0044183">
    <property type="term" value="F:protein folding chaperone"/>
    <property type="evidence" value="ECO:0000318"/>
    <property type="project" value="GO_Central"/>
</dbReference>
<dbReference type="GO" id="GO:0051087">
    <property type="term" value="F:protein-folding chaperone binding"/>
    <property type="evidence" value="ECO:0007669"/>
    <property type="project" value="Ensembl"/>
</dbReference>
<dbReference type="GO" id="GO:0048156">
    <property type="term" value="F:tau protein binding"/>
    <property type="evidence" value="ECO:0007669"/>
    <property type="project" value="Ensembl"/>
</dbReference>
<dbReference type="GO" id="GO:0051082">
    <property type="term" value="F:unfolded protein binding"/>
    <property type="evidence" value="ECO:0000314"/>
    <property type="project" value="UniProtKB"/>
</dbReference>
<dbReference type="GO" id="GO:0051085">
    <property type="term" value="P:chaperone cofactor-dependent protein refolding"/>
    <property type="evidence" value="ECO:0000318"/>
    <property type="project" value="GO_Central"/>
</dbReference>
<dbReference type="GO" id="GO:0007141">
    <property type="term" value="P:male meiosis I"/>
    <property type="evidence" value="ECO:0007669"/>
    <property type="project" value="Ensembl"/>
</dbReference>
<dbReference type="GO" id="GO:0007140">
    <property type="term" value="P:male meiotic nuclear division"/>
    <property type="evidence" value="ECO:0000304"/>
    <property type="project" value="ProtInc"/>
</dbReference>
<dbReference type="GO" id="GO:0090084">
    <property type="term" value="P:negative regulation of inclusion body assembly"/>
    <property type="evidence" value="ECO:0000314"/>
    <property type="project" value="UniProtKB"/>
</dbReference>
<dbReference type="GO" id="GO:0010971">
    <property type="term" value="P:positive regulation of G2/M transition of mitotic cell cycle"/>
    <property type="evidence" value="ECO:0007669"/>
    <property type="project" value="Ensembl"/>
</dbReference>
<dbReference type="GO" id="GO:0042026">
    <property type="term" value="P:protein refolding"/>
    <property type="evidence" value="ECO:0000314"/>
    <property type="project" value="UniProtKB"/>
</dbReference>
<dbReference type="GO" id="GO:0009409">
    <property type="term" value="P:response to cold"/>
    <property type="evidence" value="ECO:0000250"/>
    <property type="project" value="AgBase"/>
</dbReference>
<dbReference type="GO" id="GO:0009408">
    <property type="term" value="P:response to heat"/>
    <property type="evidence" value="ECO:0000250"/>
    <property type="project" value="AgBase"/>
</dbReference>
<dbReference type="GO" id="GO:0006986">
    <property type="term" value="P:response to unfolded protein"/>
    <property type="evidence" value="ECO:0000304"/>
    <property type="project" value="ProtInc"/>
</dbReference>
<dbReference type="GO" id="GO:0007286">
    <property type="term" value="P:spermatid development"/>
    <property type="evidence" value="ECO:0000304"/>
    <property type="project" value="ProtInc"/>
</dbReference>
<dbReference type="GO" id="GO:0007283">
    <property type="term" value="P:spermatogenesis"/>
    <property type="evidence" value="ECO:0000250"/>
    <property type="project" value="UniProtKB"/>
</dbReference>
<dbReference type="GO" id="GO:0070194">
    <property type="term" value="P:synaptonemal complex disassembly"/>
    <property type="evidence" value="ECO:0007669"/>
    <property type="project" value="Ensembl"/>
</dbReference>
<dbReference type="CDD" id="cd10233">
    <property type="entry name" value="ASKHA_NBD_HSP70_HSPA1"/>
    <property type="match status" value="1"/>
</dbReference>
<dbReference type="FunFam" id="2.60.34.10:FF:000002">
    <property type="entry name" value="Heat shock 70 kDa"/>
    <property type="match status" value="1"/>
</dbReference>
<dbReference type="FunFam" id="3.30.420.40:FF:000172">
    <property type="entry name" value="Heat shock 70 kDa protein"/>
    <property type="match status" value="1"/>
</dbReference>
<dbReference type="FunFam" id="3.90.640.10:FF:000058">
    <property type="entry name" value="Heat shock 70 kDa protein"/>
    <property type="match status" value="1"/>
</dbReference>
<dbReference type="FunFam" id="1.20.1270.10:FF:000010">
    <property type="entry name" value="Heat shock 70 kDa protein 2"/>
    <property type="match status" value="1"/>
</dbReference>
<dbReference type="FunFam" id="3.30.30.30:FF:000001">
    <property type="entry name" value="heat shock 70 kDa protein-like"/>
    <property type="match status" value="1"/>
</dbReference>
<dbReference type="FunFam" id="3.30.420.40:FF:000135">
    <property type="entry name" value="Heat shock cognate 71 kDa protein"/>
    <property type="match status" value="1"/>
</dbReference>
<dbReference type="FunFam" id="3.30.420.40:FF:000026">
    <property type="entry name" value="Heat shock protein 70"/>
    <property type="match status" value="1"/>
</dbReference>
<dbReference type="Gene3D" id="1.20.1270.10">
    <property type="match status" value="1"/>
</dbReference>
<dbReference type="Gene3D" id="3.30.30.30">
    <property type="match status" value="1"/>
</dbReference>
<dbReference type="Gene3D" id="3.30.420.40">
    <property type="match status" value="2"/>
</dbReference>
<dbReference type="Gene3D" id="3.90.640.10">
    <property type="entry name" value="Actin, Chain A, domain 4"/>
    <property type="match status" value="1"/>
</dbReference>
<dbReference type="Gene3D" id="2.60.34.10">
    <property type="entry name" value="Substrate Binding Domain Of DNAk, Chain A, domain 1"/>
    <property type="match status" value="1"/>
</dbReference>
<dbReference type="InterPro" id="IPR043129">
    <property type="entry name" value="ATPase_NBD"/>
</dbReference>
<dbReference type="InterPro" id="IPR018181">
    <property type="entry name" value="Heat_shock_70_CS"/>
</dbReference>
<dbReference type="InterPro" id="IPR029048">
    <property type="entry name" value="HSP70_C_sf"/>
</dbReference>
<dbReference type="InterPro" id="IPR029047">
    <property type="entry name" value="HSP70_peptide-bd_sf"/>
</dbReference>
<dbReference type="InterPro" id="IPR013126">
    <property type="entry name" value="Hsp_70_fam"/>
</dbReference>
<dbReference type="NCBIfam" id="NF001413">
    <property type="entry name" value="PRK00290.1"/>
    <property type="match status" value="1"/>
</dbReference>
<dbReference type="PANTHER" id="PTHR19375">
    <property type="entry name" value="HEAT SHOCK PROTEIN 70KDA"/>
    <property type="match status" value="1"/>
</dbReference>
<dbReference type="Pfam" id="PF00012">
    <property type="entry name" value="HSP70"/>
    <property type="match status" value="1"/>
</dbReference>
<dbReference type="PRINTS" id="PR00301">
    <property type="entry name" value="HEATSHOCK70"/>
</dbReference>
<dbReference type="SUPFAM" id="SSF53067">
    <property type="entry name" value="Actin-like ATPase domain"/>
    <property type="match status" value="2"/>
</dbReference>
<dbReference type="SUPFAM" id="SSF100934">
    <property type="entry name" value="Heat shock protein 70kD (HSP70), C-terminal subdomain"/>
    <property type="match status" value="1"/>
</dbReference>
<dbReference type="SUPFAM" id="SSF100920">
    <property type="entry name" value="Heat shock protein 70kD (HSP70), peptide-binding domain"/>
    <property type="match status" value="1"/>
</dbReference>
<dbReference type="PROSITE" id="PS00297">
    <property type="entry name" value="HSP70_1"/>
    <property type="match status" value="1"/>
</dbReference>
<dbReference type="PROSITE" id="PS00329">
    <property type="entry name" value="HSP70_2"/>
    <property type="match status" value="1"/>
</dbReference>
<dbReference type="PROSITE" id="PS01036">
    <property type="entry name" value="HSP70_3"/>
    <property type="match status" value="1"/>
</dbReference>
<protein>
    <recommendedName>
        <fullName>Heat shock-related 70 kDa protein 2</fullName>
        <shortName>Heat shock 70 kDa protein 2</shortName>
    </recommendedName>
    <alternativeName>
        <fullName>Heat shock protein family A member 2</fullName>
    </alternativeName>
</protein>
<reference key="1">
    <citation type="journal article" date="1994" name="Genomics">
        <title>Cloning, sequencing, and mapping of the human chromosome 14 heat shock protein gene (HSPA2).</title>
        <authorList>
            <person name="Bonnycastle L.L.C."/>
            <person name="Yu C.-E."/>
            <person name="Hunt C.R."/>
            <person name="Trask B.J."/>
            <person name="Clancy K.P."/>
            <person name="Weber J.L."/>
            <person name="Patterson D."/>
            <person name="Schellenberg G.D."/>
        </authorList>
    </citation>
    <scope>NUCLEOTIDE SEQUENCE [GENOMIC DNA]</scope>
</reference>
<reference key="2">
    <citation type="submission" date="1996-04" db="EMBL/GenBank/DDBJ databases">
        <authorList>
            <person name="Goralski T.J."/>
            <person name="Krensky A.M."/>
        </authorList>
    </citation>
    <scope>NUCLEOTIDE SEQUENCE [MRNA]</scope>
</reference>
<reference key="3">
    <citation type="submission" date="2003-08" db="EMBL/GenBank/DDBJ databases">
        <title>Cloning of human full-length CDSs in BD Creator(TM) system donor vector.</title>
        <authorList>
            <person name="Kalnine N."/>
            <person name="Chen X."/>
            <person name="Rolfs A."/>
            <person name="Halleck A."/>
            <person name="Hines L."/>
            <person name="Eisenstein S."/>
            <person name="Koundinya M."/>
            <person name="Raphael J."/>
            <person name="Moreira D."/>
            <person name="Kelley T."/>
            <person name="LaBaer J."/>
            <person name="Lin Y."/>
            <person name="Phelan M."/>
            <person name="Farmer A."/>
        </authorList>
    </citation>
    <scope>NUCLEOTIDE SEQUENCE [LARGE SCALE MRNA]</scope>
</reference>
<reference key="4">
    <citation type="submission" date="2006-04" db="EMBL/GenBank/DDBJ databases">
        <authorList>
            <consortium name="NIEHS SNPs program"/>
        </authorList>
    </citation>
    <scope>NUCLEOTIDE SEQUENCE [GENOMIC DNA]</scope>
    <scope>VARIANTS SER-191 AND GLU-496</scope>
</reference>
<reference key="5">
    <citation type="journal article" date="2004" name="Genome Res.">
        <title>The status, quality, and expansion of the NIH full-length cDNA project: the Mammalian Gene Collection (MGC).</title>
        <authorList>
            <consortium name="The MGC Project Team"/>
        </authorList>
    </citation>
    <scope>NUCLEOTIDE SEQUENCE [LARGE SCALE MRNA]</scope>
    <source>
        <tissue>Brain</tissue>
        <tissue>Eye</tissue>
    </source>
</reference>
<reference key="6">
    <citation type="journal article" date="1994" name="Hum. Mol. Genet.">
        <title>A heat shock gene at 14q22: mapping and expression.</title>
        <authorList>
            <person name="Roux A.-F."/>
            <person name="Nguyen V.T.T."/>
            <person name="Squire J.A."/>
            <person name="Cox D.W."/>
        </authorList>
    </citation>
    <scope>NUCLEOTIDE SEQUENCE [GENOMIC DNA] OF 1-126</scope>
</reference>
<reference key="7">
    <citation type="journal article" date="2008" name="Biochemistry">
        <title>FKBP36 forms complexes with clathrin and Hsp72 in spermatocytes.</title>
        <authorList>
            <person name="Jarczowski F."/>
            <person name="Fischer G."/>
            <person name="Edlich F."/>
        </authorList>
    </citation>
    <scope>INTERACTION WITH FKBP6</scope>
</reference>
<reference key="8">
    <citation type="journal article" date="2011" name="BMC Syst. Biol.">
        <title>Initial characterization of the human central proteome.</title>
        <authorList>
            <person name="Burkard T.R."/>
            <person name="Planyavsky M."/>
            <person name="Kaupe I."/>
            <person name="Breitwieser F.P."/>
            <person name="Buerckstuemmer T."/>
            <person name="Bennett K.L."/>
            <person name="Superti-Furga G."/>
            <person name="Colinge J."/>
        </authorList>
    </citation>
    <scope>IDENTIFICATION BY MASS SPECTROMETRY [LARGE SCALE ANALYSIS]</scope>
</reference>
<reference key="9">
    <citation type="journal article" date="2013" name="J. Biol. Chem.">
        <title>Identification and characterization of a novel human methyltransferase modulating Hsp70 function through lysine methylation.</title>
        <authorList>
            <person name="Jakobsson M.E."/>
            <person name="Moen A."/>
            <person name="Bousset L."/>
            <person name="Egge-Jacobsen W."/>
            <person name="Kernstock S."/>
            <person name="Melki R."/>
            <person name="Falnes P.O."/>
        </authorList>
    </citation>
    <scope>METHYLATION AT LYS-564</scope>
    <scope>MUTAGENESIS OF LYS-564</scope>
</reference>
<reference key="10">
    <citation type="journal article" date="2016" name="Cell Stress Chaperones">
        <title>The human HSP70 family of chaperones: where do we stand?</title>
        <authorList>
            <person name="Radons J."/>
        </authorList>
    </citation>
    <scope>REVIEW</scope>
</reference>
<reference key="11">
    <citation type="journal article" date="2010" name="PLoS ONE">
        <title>Crystal structures of the ATPase domains of four human Hsp70 isoforms: HSPA1L/Hsp70-hom, HSPA2/Hsp70-2, HSPA6/Hsp70B', and HSPA5/BiP/GRP78.</title>
        <authorList>
            <person name="Wisniewska M."/>
            <person name="Karlberg T."/>
            <person name="Lehtio L."/>
            <person name="Johansson I."/>
            <person name="Kotenyova T."/>
            <person name="Moche M."/>
            <person name="Schuler H."/>
        </authorList>
    </citation>
    <scope>X-RAY CRYSTALLOGRAPHY (1.3 ANGSTROMS) OF 6-386 IN COMPLEX WITH ADP AND PHOSPHATE</scope>
</reference>
<feature type="chain" id="PRO_0000078258" description="Heat shock-related 70 kDa protein 2">
    <location>
        <begin position="1"/>
        <end position="639"/>
    </location>
</feature>
<feature type="region of interest" description="Nucleotide-binding domain (NBD)" evidence="1">
    <location>
        <begin position="2"/>
        <end position="389"/>
    </location>
</feature>
<feature type="region of interest" description="Substrate-binding domain (SBD)" evidence="1">
    <location>
        <begin position="397"/>
        <end position="512"/>
    </location>
</feature>
<feature type="region of interest" description="Disordered" evidence="4">
    <location>
        <begin position="613"/>
        <end position="639"/>
    </location>
</feature>
<feature type="compositionally biased region" description="Gly residues" evidence="4">
    <location>
        <begin position="616"/>
        <end position="631"/>
    </location>
</feature>
<feature type="binding site">
    <location>
        <begin position="13"/>
        <end position="16"/>
    </location>
    <ligand>
        <name>ATP</name>
        <dbReference type="ChEBI" id="CHEBI:30616"/>
    </ligand>
</feature>
<feature type="binding site">
    <location>
        <position position="72"/>
    </location>
    <ligand>
        <name>ATP</name>
        <dbReference type="ChEBI" id="CHEBI:30616"/>
    </ligand>
</feature>
<feature type="binding site">
    <location>
        <begin position="205"/>
        <end position="207"/>
    </location>
    <ligand>
        <name>ATP</name>
        <dbReference type="ChEBI" id="CHEBI:30616"/>
    </ligand>
</feature>
<feature type="binding site">
    <location>
        <begin position="271"/>
        <end position="278"/>
    </location>
    <ligand>
        <name>ATP</name>
        <dbReference type="ChEBI" id="CHEBI:30616"/>
    </ligand>
</feature>
<feature type="binding site">
    <location>
        <begin position="342"/>
        <end position="345"/>
    </location>
    <ligand>
        <name>ATP</name>
        <dbReference type="ChEBI" id="CHEBI:30616"/>
    </ligand>
</feature>
<feature type="modified residue" description="Phosphoserine" evidence="2">
    <location>
        <position position="403"/>
    </location>
</feature>
<feature type="modified residue" description="Phosphothreonine" evidence="2">
    <location>
        <position position="408"/>
    </location>
</feature>
<feature type="modified residue" description="Phosphothreonine" evidence="2">
    <location>
        <position position="414"/>
    </location>
</feature>
<feature type="modified residue" description="N6,N6,N6-trimethyllysine; by METTL21A; in vitro" evidence="6">
    <location>
        <position position="564"/>
    </location>
</feature>
<feature type="sequence variant" id="VAR_032706" description="In dbSNP:rs45456191." evidence="7">
    <original>C</original>
    <variation>S</variation>
    <location>
        <position position="191"/>
    </location>
</feature>
<feature type="sequence variant" id="VAR_032707" description="In dbSNP:rs45447398." evidence="7">
    <original>K</original>
    <variation>E</variation>
    <location>
        <position position="496"/>
    </location>
</feature>
<feature type="mutagenesis site" description="Abolishes methylation by METTL21A." evidence="6">
    <original>K</original>
    <variation>A</variation>
    <location>
        <position position="564"/>
    </location>
</feature>
<feature type="sequence conflict" description="In Ref. 5; AAH36107." evidence="9" ref="5">
    <original>T</original>
    <variation>P</variation>
    <location>
        <position position="14"/>
    </location>
</feature>
<feature type="sequence conflict" description="In Ref. 6; AAC50076." evidence="9" ref="6">
    <location>
        <position position="54"/>
    </location>
</feature>
<feature type="sequence conflict" description="In Ref. 5; AAH36107." evidence="9" ref="5">
    <original>E</original>
    <variation>G</variation>
    <location>
        <position position="80"/>
    </location>
</feature>
<feature type="sequence conflict" description="In Ref. 2; AAD11466." evidence="9" ref="2">
    <original>L</original>
    <variation>S</variation>
    <location>
        <position position="266"/>
    </location>
</feature>
<feature type="strand" evidence="11">
    <location>
        <begin position="8"/>
        <end position="12"/>
    </location>
</feature>
<feature type="strand" evidence="11">
    <location>
        <begin position="14"/>
        <end position="23"/>
    </location>
</feature>
<feature type="strand" evidence="11">
    <location>
        <begin position="26"/>
        <end position="29"/>
    </location>
</feature>
<feature type="strand" evidence="11">
    <location>
        <begin position="37"/>
        <end position="40"/>
    </location>
</feature>
<feature type="strand" evidence="11">
    <location>
        <begin position="43"/>
        <end position="45"/>
    </location>
</feature>
<feature type="strand" evidence="11">
    <location>
        <begin position="50"/>
        <end position="52"/>
    </location>
</feature>
<feature type="helix" evidence="11">
    <location>
        <begin position="54"/>
        <end position="58"/>
    </location>
</feature>
<feature type="turn" evidence="11">
    <location>
        <begin position="59"/>
        <end position="62"/>
    </location>
</feature>
<feature type="helix" evidence="12">
    <location>
        <begin position="64"/>
        <end position="66"/>
    </location>
</feature>
<feature type="helix" evidence="11">
    <location>
        <begin position="71"/>
        <end position="73"/>
    </location>
</feature>
<feature type="turn" evidence="11">
    <location>
        <begin position="74"/>
        <end position="76"/>
    </location>
</feature>
<feature type="helix" evidence="11">
    <location>
        <begin position="82"/>
        <end position="88"/>
    </location>
</feature>
<feature type="strand" evidence="11">
    <location>
        <begin position="92"/>
        <end position="98"/>
    </location>
</feature>
<feature type="strand" evidence="11">
    <location>
        <begin position="101"/>
        <end position="108"/>
    </location>
</feature>
<feature type="strand" evidence="11">
    <location>
        <begin position="111"/>
        <end position="115"/>
    </location>
</feature>
<feature type="helix" evidence="11">
    <location>
        <begin position="117"/>
        <end position="136"/>
    </location>
</feature>
<feature type="strand" evidence="11">
    <location>
        <begin position="142"/>
        <end position="147"/>
    </location>
</feature>
<feature type="helix" evidence="11">
    <location>
        <begin position="153"/>
        <end position="166"/>
    </location>
</feature>
<feature type="strand" evidence="11">
    <location>
        <begin position="169"/>
        <end position="175"/>
    </location>
</feature>
<feature type="helix" evidence="11">
    <location>
        <begin position="176"/>
        <end position="183"/>
    </location>
</feature>
<feature type="turn" evidence="11">
    <location>
        <begin position="184"/>
        <end position="187"/>
    </location>
</feature>
<feature type="strand" evidence="11">
    <location>
        <begin position="191"/>
        <end position="194"/>
    </location>
</feature>
<feature type="strand" evidence="11">
    <location>
        <begin position="197"/>
        <end position="203"/>
    </location>
</feature>
<feature type="strand" evidence="11">
    <location>
        <begin position="208"/>
        <end position="216"/>
    </location>
</feature>
<feature type="strand" evidence="11">
    <location>
        <begin position="219"/>
        <end position="228"/>
    </location>
</feature>
<feature type="helix" evidence="11">
    <location>
        <begin position="233"/>
        <end position="252"/>
    </location>
</feature>
<feature type="helix" evidence="11">
    <location>
        <begin position="260"/>
        <end position="276"/>
    </location>
</feature>
<feature type="turn" evidence="11">
    <location>
        <begin position="277"/>
        <end position="279"/>
    </location>
</feature>
<feature type="strand" evidence="11">
    <location>
        <begin position="280"/>
        <end position="291"/>
    </location>
</feature>
<feature type="strand" evidence="11">
    <location>
        <begin position="294"/>
        <end position="301"/>
    </location>
</feature>
<feature type="helix" evidence="11">
    <location>
        <begin position="302"/>
        <end position="308"/>
    </location>
</feature>
<feature type="helix" evidence="11">
    <location>
        <begin position="310"/>
        <end position="315"/>
    </location>
</feature>
<feature type="helix" evidence="11">
    <location>
        <begin position="317"/>
        <end position="327"/>
    </location>
</feature>
<feature type="helix" evidence="11">
    <location>
        <begin position="331"/>
        <end position="333"/>
    </location>
</feature>
<feature type="strand" evidence="11">
    <location>
        <begin position="336"/>
        <end position="341"/>
    </location>
</feature>
<feature type="helix" evidence="11">
    <location>
        <begin position="342"/>
        <end position="345"/>
    </location>
</feature>
<feature type="helix" evidence="11">
    <location>
        <begin position="347"/>
        <end position="356"/>
    </location>
</feature>
<feature type="turn" evidence="11">
    <location>
        <begin position="357"/>
        <end position="359"/>
    </location>
</feature>
<feature type="turn" evidence="11">
    <location>
        <begin position="368"/>
        <end position="370"/>
    </location>
</feature>
<feature type="helix" evidence="11">
    <location>
        <begin position="371"/>
        <end position="383"/>
    </location>
</feature>
<name>HSP72_HUMAN</name>
<comment type="function">
    <text evidence="3 8">Molecular chaperone implicated in a wide variety of cellular processes, including protection of the proteome from stress, folding and transport of newly synthesized polypeptides, activation of proteolysis of misfolded proteins and the formation and dissociation of protein complexes. Plays a pivotal role in the protein quality control system, ensuring the correct folding of proteins, the re-folding of misfolded proteins and controlling the targeting of proteins for subsequent degradation. This is achieved through cycles of ATP binding, ATP hydrolysis and ADP release, mediated by co-chaperones. The affinity for polypeptides is regulated by its nucleotide bound state. In the ATP-bound form, it has a low affinity for substrate proteins. However, upon hydrolysis of the ATP to ADP, it undergoes a conformational change that increases its affinity for substrate proteins. It goes through repeated cycles of ATP hydrolysis and nucleotide exchange, which permits cycles of substrate binding and release (PubMed:26865365). Plays a role in spermatogenesis. In association with SHCBP1L may participate in the maintenance of spindle integrity during meiosis in male germ cells (By similarity).</text>
</comment>
<comment type="subunit">
    <text evidence="3 5">Interacts with FKBP6 (PubMed:18529014). Interacts with ZNF541. Component of the CatSper complex. Interacts with RABL2/RABL2A; binds preferentially to GTP-bound RABL2. Interacts with SHCBP1L; this interaction may promote the recruitment of HSPA2 to the spindle (By similarity).</text>
</comment>
<comment type="interaction">
    <interactant intactId="EBI-356991">
        <id>P54652</id>
    </interactant>
    <interactant intactId="EBI-18899653">
        <id>Q6DHV7-2</id>
        <label>ADAL</label>
    </interactant>
    <organismsDiffer>false</organismsDiffer>
    <experiments>3</experiments>
</comment>
<comment type="interaction">
    <interactant intactId="EBI-356991">
        <id>P54652</id>
    </interactant>
    <interactant intactId="EBI-8466265">
        <id>Q96MA6</id>
        <label>AK8</label>
    </interactant>
    <organismsDiffer>false</organismsDiffer>
    <experiments>3</experiments>
</comment>
<comment type="interaction">
    <interactant intactId="EBI-356991">
        <id>P54652</id>
    </interactant>
    <interactant intactId="EBI-5280499">
        <id>Q66PJ3-4</id>
        <label>ARL6IP4</label>
    </interactant>
    <organismsDiffer>false</organismsDiffer>
    <experiments>3</experiments>
</comment>
<comment type="interaction">
    <interactant intactId="EBI-356991">
        <id>P54652</id>
    </interactant>
    <interactant intactId="EBI-745641">
        <id>Q96DX5</id>
        <label>ASB9</label>
    </interactant>
    <organismsDiffer>false</organismsDiffer>
    <experiments>3</experiments>
</comment>
<comment type="interaction">
    <interactant intactId="EBI-356991">
        <id>P54652</id>
    </interactant>
    <interactant intactId="EBI-540797">
        <id>Q9UBL3</id>
        <label>ASH2L</label>
    </interactant>
    <organismsDiffer>false</organismsDiffer>
    <experiments>3</experiments>
</comment>
<comment type="interaction">
    <interactant intactId="EBI-356991">
        <id>P54652</id>
    </interactant>
    <interactant intactId="EBI-9089489">
        <id>Q96FT7-4</id>
        <label>ASIC4</label>
    </interactant>
    <organismsDiffer>false</organismsDiffer>
    <experiments>3</experiments>
</comment>
<comment type="interaction">
    <interactant intactId="EBI-356991">
        <id>P54652</id>
    </interactant>
    <interactant intactId="EBI-2949658">
        <id>O95429</id>
        <label>BAG4</label>
    </interactant>
    <organismsDiffer>false</organismsDiffer>
    <experiments>5</experiments>
</comment>
<comment type="interaction">
    <interactant intactId="EBI-356991">
        <id>P54652</id>
    </interactant>
    <interactant intactId="EBI-742750">
        <id>Q8TBE0</id>
        <label>BAHD1</label>
    </interactant>
    <organismsDiffer>false</organismsDiffer>
    <experiments>3</experiments>
</comment>
<comment type="interaction">
    <interactant intactId="EBI-356991">
        <id>P54652</id>
    </interactant>
    <interactant intactId="EBI-12300031">
        <id>Q9NNX6-10</id>
        <label>CD209</label>
    </interactant>
    <organismsDiffer>false</organismsDiffer>
    <experiments>3</experiments>
</comment>
<comment type="interaction">
    <interactant intactId="EBI-356991">
        <id>P54652</id>
    </interactant>
    <interactant intactId="EBI-12950757">
        <id>Q9Y4F5-3</id>
        <label>CEP170B</label>
    </interactant>
    <organismsDiffer>false</organismsDiffer>
    <experiments>3</experiments>
</comment>
<comment type="interaction">
    <interactant intactId="EBI-356991">
        <id>P54652</id>
    </interactant>
    <interactant intactId="EBI-749253">
        <id>Q8WUX9</id>
        <label>CHMP7</label>
    </interactant>
    <organismsDiffer>false</organismsDiffer>
    <experiments>3</experiments>
</comment>
<comment type="interaction">
    <interactant intactId="EBI-356991">
        <id>P54652</id>
    </interactant>
    <interactant intactId="EBI-11526226">
        <id>Q96EY1-3</id>
        <label>DNAJA3</label>
    </interactant>
    <organismsDiffer>false</organismsDiffer>
    <experiments>3</experiments>
</comment>
<comment type="interaction">
    <interactant intactId="EBI-356991">
        <id>P54652</id>
    </interactant>
    <interactant intactId="EBI-23669343">
        <id>Q92782-2</id>
        <label>DPF1</label>
    </interactant>
    <organismsDiffer>false</organismsDiffer>
    <experiments>3</experiments>
</comment>
<comment type="interaction">
    <interactant intactId="EBI-356991">
        <id>P54652</id>
    </interactant>
    <interactant intactId="EBI-3957005">
        <id>Q53R41</id>
        <label>FASTKD1</label>
    </interactant>
    <organismsDiffer>false</organismsDiffer>
    <experiments>3</experiments>
</comment>
<comment type="interaction">
    <interactant intactId="EBI-356991">
        <id>P54652</id>
    </interactant>
    <interactant intactId="EBI-3909329">
        <id>Q9NSA1</id>
        <label>FGF21</label>
    </interactant>
    <organismsDiffer>false</organismsDiffer>
    <experiments>4</experiments>
</comment>
<comment type="interaction">
    <interactant intactId="EBI-356991">
        <id>P54652</id>
    </interactant>
    <interactant intactId="EBI-744510">
        <id>P15407</id>
        <label>FOSL1</label>
    </interactant>
    <organismsDiffer>false</organismsDiffer>
    <experiments>3</experiments>
</comment>
<comment type="interaction">
    <interactant intactId="EBI-356991">
        <id>P54652</id>
    </interactant>
    <interactant intactId="EBI-618189">
        <id>Q06547-2</id>
        <label>GABPB1</label>
    </interactant>
    <organismsDiffer>false</organismsDiffer>
    <experiments>3</experiments>
</comment>
<comment type="interaction">
    <interactant intactId="EBI-356991">
        <id>P54652</id>
    </interactant>
    <interactant intactId="EBI-9088619">
        <id>Q06547-3</id>
        <label>GABPB1</label>
    </interactant>
    <organismsDiffer>false</organismsDiffer>
    <experiments>3</experiments>
</comment>
<comment type="interaction">
    <interactant intactId="EBI-356991">
        <id>P54652</id>
    </interactant>
    <interactant intactId="EBI-2556750">
        <id>Q03933</id>
        <label>HSF2</label>
    </interactant>
    <organismsDiffer>false</organismsDiffer>
    <experiments>2</experiments>
</comment>
<comment type="interaction">
    <interactant intactId="EBI-356991">
        <id>P54652</id>
    </interactant>
    <interactant intactId="EBI-356763">
        <id>Q9NZL4</id>
        <label>HSPBP1</label>
    </interactant>
    <organismsDiffer>false</organismsDiffer>
    <experiments>9</experiments>
</comment>
<comment type="interaction">
    <interactant intactId="EBI-356991">
        <id>P54652</id>
    </interactant>
    <interactant intactId="EBI-466029">
        <id>P42858</id>
        <label>HTT</label>
    </interactant>
    <organismsDiffer>false</organismsDiffer>
    <experiments>3</experiments>
</comment>
<comment type="interaction">
    <interactant intactId="EBI-356991">
        <id>P54652</id>
    </interactant>
    <interactant intactId="EBI-6509505">
        <id>Q0VD86</id>
        <label>INCA1</label>
    </interactant>
    <organismsDiffer>false</organismsDiffer>
    <experiments>3</experiments>
</comment>
<comment type="interaction">
    <interactant intactId="EBI-356991">
        <id>P54652</id>
    </interactant>
    <interactant intactId="EBI-743960">
        <id>Q8N5Z5</id>
        <label>KCTD17</label>
    </interactant>
    <organismsDiffer>false</organismsDiffer>
    <experiments>3</experiments>
</comment>
<comment type="interaction">
    <interactant intactId="EBI-356991">
        <id>P54652</id>
    </interactant>
    <interactant intactId="EBI-1643885">
        <id>Q6P597</id>
        <label>KLC3</label>
    </interactant>
    <organismsDiffer>false</organismsDiffer>
    <experiments>3</experiments>
</comment>
<comment type="interaction">
    <interactant intactId="EBI-356991">
        <id>P54652</id>
    </interactant>
    <interactant intactId="EBI-713382">
        <id>O43504</id>
        <label>LAMTOR5</label>
    </interactant>
    <organismsDiffer>false</organismsDiffer>
    <experiments>3</experiments>
</comment>
<comment type="interaction">
    <interactant intactId="EBI-356991">
        <id>P54652</id>
    </interactant>
    <interactant intactId="EBI-1052558">
        <id>Q92615</id>
        <label>LARP4B</label>
    </interactant>
    <organismsDiffer>false</organismsDiffer>
    <experiments>3</experiments>
</comment>
<comment type="interaction">
    <interactant intactId="EBI-356991">
        <id>P54652</id>
    </interactant>
    <interactant intactId="EBI-476263">
        <id>Q99683</id>
        <label>MAP3K5</label>
    </interactant>
    <organismsDiffer>false</organismsDiffer>
    <experiments>3</experiments>
</comment>
<comment type="interaction">
    <interactant intactId="EBI-356991">
        <id>P54652</id>
    </interactant>
    <interactant intactId="EBI-8449636">
        <id>P30301</id>
        <label>MIP</label>
    </interactant>
    <organismsDiffer>false</organismsDiffer>
    <experiments>3</experiments>
</comment>
<comment type="interaction">
    <interactant intactId="EBI-356991">
        <id>P54652</id>
    </interactant>
    <interactant intactId="EBI-3908303">
        <id>Q13562</id>
        <label>NEUROD1</label>
    </interactant>
    <organismsDiffer>false</organismsDiffer>
    <experiments>3</experiments>
</comment>
<comment type="interaction">
    <interactant intactId="EBI-356991">
        <id>P54652</id>
    </interactant>
    <interactant intactId="EBI-25830200">
        <id>Q6GQQ9-2</id>
        <label>OTUD7B</label>
    </interactant>
    <organismsDiffer>false</organismsDiffer>
    <experiments>3</experiments>
</comment>
<comment type="interaction">
    <interactant intactId="EBI-356991">
        <id>P54652</id>
    </interactant>
    <interactant intactId="EBI-25852006">
        <id>Q8N2H9-4</id>
        <label>PELI3</label>
    </interactant>
    <organismsDiffer>false</organismsDiffer>
    <experiments>3</experiments>
</comment>
<comment type="interaction">
    <interactant intactId="EBI-356991">
        <id>P54652</id>
    </interactant>
    <interactant intactId="EBI-2557276">
        <id>O15534</id>
        <label>PER1</label>
    </interactant>
    <organismsDiffer>false</organismsDiffer>
    <experiments>3</experiments>
</comment>
<comment type="interaction">
    <interactant intactId="EBI-356991">
        <id>P54652</id>
    </interactant>
    <interactant intactId="EBI-21503705">
        <id>Q58EX7-2</id>
        <label>PLEKHG4</label>
    </interactant>
    <organismsDiffer>false</organismsDiffer>
    <experiments>3</experiments>
</comment>
<comment type="interaction">
    <interactant intactId="EBI-356991">
        <id>P54652</id>
    </interactant>
    <interactant intactId="EBI-26412802">
        <id>Q5SXH7-1</id>
        <label>PLEKHS1</label>
    </interactant>
    <organismsDiffer>false</organismsDiffer>
    <experiments>3</experiments>
</comment>
<comment type="interaction">
    <interactant intactId="EBI-356991">
        <id>P54652</id>
    </interactant>
    <interactant intactId="EBI-712752">
        <id>Q14181</id>
        <label>POLA2</label>
    </interactant>
    <organismsDiffer>false</organismsDiffer>
    <experiments>3</experiments>
</comment>
<comment type="interaction">
    <interactant intactId="EBI-356991">
        <id>P54652</id>
    </interactant>
    <interactant intactId="EBI-710067">
        <id>Q9H1D9</id>
        <label>POLR3F</label>
    </interactant>
    <organismsDiffer>false</organismsDiffer>
    <experiments>3</experiments>
</comment>
<comment type="interaction">
    <interactant intactId="EBI-356991">
        <id>P54652</id>
    </interactant>
    <interactant intactId="EBI-2803328">
        <id>P79522</id>
        <label>PRR3</label>
    </interactant>
    <organismsDiffer>false</organismsDiffer>
    <experiments>3</experiments>
</comment>
<comment type="interaction">
    <interactant intactId="EBI-356991">
        <id>P54652</id>
    </interactant>
    <interactant intactId="EBI-945916">
        <id>Q92530</id>
        <label>PSMF1</label>
    </interactant>
    <organismsDiffer>false</organismsDiffer>
    <experiments>3</experiments>
</comment>
<comment type="interaction">
    <interactant intactId="EBI-356991">
        <id>P54652</id>
    </interactant>
    <interactant intactId="EBI-9089733">
        <id>Q9HD47-3</id>
        <label>RANGRF</label>
    </interactant>
    <organismsDiffer>false</organismsDiffer>
    <experiments>3</experiments>
</comment>
<comment type="interaction">
    <interactant intactId="EBI-356991">
        <id>P54652</id>
    </interactant>
    <interactant intactId="EBI-1773811">
        <id>Q9NUC0</id>
        <label>SERTAD4</label>
    </interactant>
    <organismsDiffer>false</organismsDiffer>
    <experiments>3</experiments>
</comment>
<comment type="interaction">
    <interactant intactId="EBI-356991">
        <id>P54652</id>
    </interactant>
    <interactant intactId="EBI-13292283">
        <id>Q9UHI5</id>
        <label>SLC7A8</label>
    </interactant>
    <organismsDiffer>false</organismsDiffer>
    <experiments>3</experiments>
</comment>
<comment type="interaction">
    <interactant intactId="EBI-356991">
        <id>P54652</id>
    </interactant>
    <interactant intactId="EBI-3929549">
        <id>O14544</id>
        <label>SOCS6</label>
    </interactant>
    <organismsDiffer>false</organismsDiffer>
    <experiments>3</experiments>
</comment>
<comment type="interaction">
    <interactant intactId="EBI-356991">
        <id>P54652</id>
    </interactant>
    <interactant intactId="EBI-10696971">
        <id>Q7Z6I5</id>
        <label>SPATA12</label>
    </interactant>
    <organismsDiffer>false</organismsDiffer>
    <experiments>3</experiments>
</comment>
<comment type="interaction">
    <interactant intactId="EBI-356991">
        <id>P54652</id>
    </interactant>
    <interactant intactId="EBI-3923692">
        <id>Q496A3</id>
        <label>SPATS1</label>
    </interactant>
    <organismsDiffer>false</organismsDiffer>
    <experiments>3</experiments>
</comment>
<comment type="interaction">
    <interactant intactId="EBI-356991">
        <id>P54652</id>
    </interactant>
    <interactant intactId="EBI-358037">
        <id>P05455</id>
        <label>SSB</label>
    </interactant>
    <organismsDiffer>false</organismsDiffer>
    <experiments>3</experiments>
</comment>
<comment type="interaction">
    <interactant intactId="EBI-356991">
        <id>P54652</id>
    </interactant>
    <interactant intactId="EBI-11123832">
        <id>O60506-4</id>
        <label>SYNCRIP</label>
    </interactant>
    <organismsDiffer>false</organismsDiffer>
    <experiments>3</experiments>
</comment>
<comment type="interaction">
    <interactant intactId="EBI-356991">
        <id>P54652</id>
    </interactant>
    <interactant intactId="EBI-9089028">
        <id>Q7Z7C8-2</id>
        <label>TAF8</label>
    </interactant>
    <organismsDiffer>false</organismsDiffer>
    <experiments>3</experiments>
</comment>
<comment type="interaction">
    <interactant intactId="EBI-356991">
        <id>P54652</id>
    </interactant>
    <interactant intactId="EBI-25830583">
        <id>Q8N0U2</id>
        <label>TMEM61</label>
    </interactant>
    <organismsDiffer>false</organismsDiffer>
    <experiments>3</experiments>
</comment>
<comment type="interaction">
    <interactant intactId="EBI-356991">
        <id>P54652</id>
    </interactant>
    <interactant intactId="EBI-2130415">
        <id>O00635</id>
        <label>TRIM38</label>
    </interactant>
    <organismsDiffer>false</organismsDiffer>
    <experiments>4</experiments>
</comment>
<comment type="interaction">
    <interactant intactId="EBI-356991">
        <id>P54652</id>
    </interactant>
    <interactant intactId="EBI-3914288">
        <id>O60636</id>
        <label>TSPAN2</label>
    </interactant>
    <organismsDiffer>false</organismsDiffer>
    <experiments>3</experiments>
</comment>
<comment type="interaction">
    <interactant intactId="EBI-356991">
        <id>P54652</id>
    </interactant>
    <interactant intactId="EBI-2339348">
        <id>P49459</id>
        <label>UBE2A</label>
    </interactant>
    <organismsDiffer>false</organismsDiffer>
    <experiments>3</experiments>
</comment>
<comment type="interaction">
    <interactant intactId="EBI-356991">
        <id>P54652</id>
    </interactant>
    <interactant intactId="EBI-10316321">
        <id>Q9NX94</id>
        <label>WBP1L</label>
    </interactant>
    <organismsDiffer>false</organismsDiffer>
    <experiments>3</experiments>
</comment>
<comment type="interaction">
    <interactant intactId="EBI-356991">
        <id>P54652</id>
    </interactant>
    <interactant intactId="EBI-1965777">
        <id>Q9BRR0</id>
        <label>ZKSCAN3</label>
    </interactant>
    <organismsDiffer>false</organismsDiffer>
    <experiments>3</experiments>
</comment>
<comment type="interaction">
    <interactant intactId="EBI-356991">
        <id>P54652</id>
    </interactant>
    <interactant intactId="EBI-2555767">
        <id>Q15973</id>
        <label>ZNF124</label>
    </interactant>
    <organismsDiffer>false</organismsDiffer>
    <experiments>3</experiments>
</comment>
<comment type="interaction">
    <interactant intactId="EBI-356991">
        <id>P54652</id>
    </interactant>
    <interactant intactId="EBI-8834821">
        <id>Q8WUU4</id>
        <label>ZNF296</label>
    </interactant>
    <organismsDiffer>false</organismsDiffer>
    <experiments>3</experiments>
</comment>
<comment type="interaction">
    <interactant intactId="EBI-356991">
        <id>P54652</id>
    </interactant>
    <interactant intactId="EBI-16435478">
        <id>Q9BYN7-2</id>
        <label>ZNF341</label>
    </interactant>
    <organismsDiffer>false</organismsDiffer>
    <experiments>3</experiments>
</comment>
<comment type="interaction">
    <interactant intactId="EBI-356991">
        <id>P54652</id>
    </interactant>
    <interactant intactId="EBI-18036029">
        <id>Q3KNS6-3</id>
        <label>ZNF829</label>
    </interactant>
    <organismsDiffer>false</organismsDiffer>
    <experiments>3</experiments>
</comment>
<comment type="interaction">
    <interactant intactId="EBI-356991">
        <id>P54652</id>
    </interactant>
    <interactant intactId="EBI-9356686">
        <id>Q96BE0</id>
    </interactant>
    <organismsDiffer>false</organismsDiffer>
    <experiments>2</experiments>
</comment>
<comment type="subcellular location">
    <subcellularLocation>
        <location evidence="3">Cytoplasm</location>
        <location evidence="3">Cytoskeleton</location>
        <location evidence="3">Spindle</location>
    </subcellularLocation>
    <text evidence="3">Colocalizes with SHCBP1L at spindle during the meiosis process.</text>
</comment>
<comment type="domain">
    <text evidence="10">The N-terminal nucleotide binding domain (NBD) (also known as the ATPase domain) is responsible for binding and hydrolyzing ATP. The C-terminal substrate-binding domain (SBD) (also known as peptide-binding domain) binds to the client/substrate proteins. The two domains are allosterically coupled so that, when ATP is bound to the NBD, the SBD binds relatively weakly to clients. When ADP is bound in the NBD, a conformational change enhances the affinity of the SBD for client proteins.</text>
</comment>
<comment type="similarity">
    <text evidence="9">Belongs to the heat shock protein 70 family.</text>
</comment>
<gene>
    <name type="primary">HSPA2</name>
</gene>